<reference key="1">
    <citation type="journal article" date="2002" name="Proc. Natl. Acad. Sci. U.S.A.">
        <title>Complete genome sequence and comparative genomic analysis of an emerging human pathogen, serotype V Streptococcus agalactiae.</title>
        <authorList>
            <person name="Tettelin H."/>
            <person name="Masignani V."/>
            <person name="Cieslewicz M.J."/>
            <person name="Eisen J.A."/>
            <person name="Peterson S.N."/>
            <person name="Wessels M.R."/>
            <person name="Paulsen I.T."/>
            <person name="Nelson K.E."/>
            <person name="Margarit I."/>
            <person name="Read T.D."/>
            <person name="Madoff L.C."/>
            <person name="Wolf A.M."/>
            <person name="Beanan M.J."/>
            <person name="Brinkac L.M."/>
            <person name="Daugherty S.C."/>
            <person name="DeBoy R.T."/>
            <person name="Durkin A.S."/>
            <person name="Kolonay J.F."/>
            <person name="Madupu R."/>
            <person name="Lewis M.R."/>
            <person name="Radune D."/>
            <person name="Fedorova N.B."/>
            <person name="Scanlan D."/>
            <person name="Khouri H.M."/>
            <person name="Mulligan S."/>
            <person name="Carty H.A."/>
            <person name="Cline R.T."/>
            <person name="Van Aken S.E."/>
            <person name="Gill J."/>
            <person name="Scarselli M."/>
            <person name="Mora M."/>
            <person name="Iacobini E.T."/>
            <person name="Brettoni C."/>
            <person name="Galli G."/>
            <person name="Mariani M."/>
            <person name="Vegni F."/>
            <person name="Maione D."/>
            <person name="Rinaudo D."/>
            <person name="Rappuoli R."/>
            <person name="Telford J.L."/>
            <person name="Kasper D.L."/>
            <person name="Grandi G."/>
            <person name="Fraser C.M."/>
        </authorList>
    </citation>
    <scope>NUCLEOTIDE SEQUENCE [LARGE SCALE GENOMIC DNA]</scope>
    <source>
        <strain>ATCC BAA-611 / 2603 V/R</strain>
    </source>
</reference>
<proteinExistence type="inferred from homology"/>
<name>Y983_STRA5</name>
<organism>
    <name type="scientific">Streptococcus agalactiae serotype V (strain ATCC BAA-611 / 2603 V/R)</name>
    <dbReference type="NCBI Taxonomy" id="208435"/>
    <lineage>
        <taxon>Bacteria</taxon>
        <taxon>Bacillati</taxon>
        <taxon>Bacillota</taxon>
        <taxon>Bacilli</taxon>
        <taxon>Lactobacillales</taxon>
        <taxon>Streptococcaceae</taxon>
        <taxon>Streptococcus</taxon>
    </lineage>
</organism>
<protein>
    <recommendedName>
        <fullName evidence="1">UPF0122 protein SAG0983</fullName>
    </recommendedName>
</protein>
<feature type="chain" id="PRO_0000211884" description="UPF0122 protein SAG0983">
    <location>
        <begin position="1"/>
        <end position="110"/>
    </location>
</feature>
<keyword id="KW-1185">Reference proteome</keyword>
<comment type="function">
    <text evidence="1">Might take part in the signal recognition particle (SRP) pathway. This is inferred from the conservation of its genetic proximity to ftsY/ffh. May be a regulatory protein.</text>
</comment>
<comment type="similarity">
    <text evidence="1">Belongs to the UPF0122 family.</text>
</comment>
<accession>P67252</accession>
<accession>Q8DZW3</accession>
<accession>Q8E5L1</accession>
<evidence type="ECO:0000255" key="1">
    <source>
        <dbReference type="HAMAP-Rule" id="MF_00245"/>
    </source>
</evidence>
<dbReference type="EMBL" id="AE009948">
    <property type="protein sequence ID" value="AAM99866.1"/>
    <property type="molecule type" value="Genomic_DNA"/>
</dbReference>
<dbReference type="RefSeq" id="NP_687994.1">
    <property type="nucleotide sequence ID" value="NC_004116.1"/>
</dbReference>
<dbReference type="RefSeq" id="WP_000402075.1">
    <property type="nucleotide sequence ID" value="NC_004116.1"/>
</dbReference>
<dbReference type="SMR" id="P67252"/>
<dbReference type="STRING" id="208435.SAG0983"/>
<dbReference type="KEGG" id="sag:SAG0983"/>
<dbReference type="PATRIC" id="fig|208435.3.peg.990"/>
<dbReference type="HOGENOM" id="CLU_129218_1_0_9"/>
<dbReference type="OrthoDB" id="6392at2"/>
<dbReference type="Proteomes" id="UP000000821">
    <property type="component" value="Chromosome"/>
</dbReference>
<dbReference type="Gene3D" id="1.10.10.10">
    <property type="entry name" value="Winged helix-like DNA-binding domain superfamily/Winged helix DNA-binding domain"/>
    <property type="match status" value="1"/>
</dbReference>
<dbReference type="HAMAP" id="MF_00245">
    <property type="entry name" value="UPF0122"/>
    <property type="match status" value="1"/>
</dbReference>
<dbReference type="InterPro" id="IPR013324">
    <property type="entry name" value="RNA_pol_sigma_r3/r4-like"/>
</dbReference>
<dbReference type="InterPro" id="IPR007394">
    <property type="entry name" value="UPF0122"/>
</dbReference>
<dbReference type="InterPro" id="IPR054831">
    <property type="entry name" value="UPF0122_fam_protein"/>
</dbReference>
<dbReference type="InterPro" id="IPR036388">
    <property type="entry name" value="WH-like_DNA-bd_sf"/>
</dbReference>
<dbReference type="NCBIfam" id="NF001066">
    <property type="entry name" value="PRK00118.1-1"/>
    <property type="match status" value="1"/>
</dbReference>
<dbReference type="NCBIfam" id="NF001068">
    <property type="entry name" value="PRK00118.1-4"/>
    <property type="match status" value="1"/>
</dbReference>
<dbReference type="NCBIfam" id="NF045758">
    <property type="entry name" value="YlxM"/>
    <property type="match status" value="1"/>
</dbReference>
<dbReference type="PANTHER" id="PTHR40083">
    <property type="entry name" value="UPF0122 PROTEIN CBO2450/CLC_2298"/>
    <property type="match status" value="1"/>
</dbReference>
<dbReference type="PANTHER" id="PTHR40083:SF1">
    <property type="entry name" value="UPF0122 PROTEIN YLXM"/>
    <property type="match status" value="1"/>
</dbReference>
<dbReference type="Pfam" id="PF04297">
    <property type="entry name" value="UPF0122"/>
    <property type="match status" value="1"/>
</dbReference>
<dbReference type="SUPFAM" id="SSF88659">
    <property type="entry name" value="Sigma3 and sigma4 domains of RNA polymerase sigma factors"/>
    <property type="match status" value="1"/>
</dbReference>
<sequence length="110" mass="13080">MEIEKTNRMNALFEFYAALLTDKQMNYIELYYADDYSLAEIAEESGVSRQAVYDNIKRTEKILEAYEMKLHMYSDYIVRSQIFDDILEKYTDDAFLQEKISILSSIDNRD</sequence>
<gene>
    <name type="ordered locus">SAG0983</name>
</gene>